<organism>
    <name type="scientific">Methanocaldococcus jannaschii (strain ATCC 43067 / DSM 2661 / JAL-1 / JCM 10045 / NBRC 100440)</name>
    <name type="common">Methanococcus jannaschii</name>
    <dbReference type="NCBI Taxonomy" id="243232"/>
    <lineage>
        <taxon>Archaea</taxon>
        <taxon>Methanobacteriati</taxon>
        <taxon>Methanobacteriota</taxon>
        <taxon>Methanomada group</taxon>
        <taxon>Methanococci</taxon>
        <taxon>Methanococcales</taxon>
        <taxon>Methanocaldococcaceae</taxon>
        <taxon>Methanocaldococcus</taxon>
    </lineage>
</organism>
<reference key="1">
    <citation type="journal article" date="1996" name="Science">
        <title>Complete genome sequence of the methanogenic archaeon, Methanococcus jannaschii.</title>
        <authorList>
            <person name="Bult C.J."/>
            <person name="White O."/>
            <person name="Olsen G.J."/>
            <person name="Zhou L."/>
            <person name="Fleischmann R.D."/>
            <person name="Sutton G.G."/>
            <person name="Blake J.A."/>
            <person name="FitzGerald L.M."/>
            <person name="Clayton R.A."/>
            <person name="Gocayne J.D."/>
            <person name="Kerlavage A.R."/>
            <person name="Dougherty B.A."/>
            <person name="Tomb J.-F."/>
            <person name="Adams M.D."/>
            <person name="Reich C.I."/>
            <person name="Overbeek R."/>
            <person name="Kirkness E.F."/>
            <person name="Weinstock K.G."/>
            <person name="Merrick J.M."/>
            <person name="Glodek A."/>
            <person name="Scott J.L."/>
            <person name="Geoghagen N.S.M."/>
            <person name="Weidman J.F."/>
            <person name="Fuhrmann J.L."/>
            <person name="Nguyen D."/>
            <person name="Utterback T.R."/>
            <person name="Kelley J.M."/>
            <person name="Peterson J.D."/>
            <person name="Sadow P.W."/>
            <person name="Hanna M.C."/>
            <person name="Cotton M.D."/>
            <person name="Roberts K.M."/>
            <person name="Hurst M.A."/>
            <person name="Kaine B.P."/>
            <person name="Borodovsky M."/>
            <person name="Klenk H.-P."/>
            <person name="Fraser C.M."/>
            <person name="Smith H.O."/>
            <person name="Woese C.R."/>
            <person name="Venter J.C."/>
        </authorList>
    </citation>
    <scope>NUCLEOTIDE SEQUENCE [LARGE SCALE GENOMIC DNA]</scope>
    <source>
        <strain>ATCC 43067 / DSM 2661 / JAL-1 / JCM 10045 / NBRC 100440</strain>
    </source>
</reference>
<reference key="2">
    <citation type="journal article" date="2000" name="J. Biol. Chem.">
        <title>Characterization of the aspartate transcarbamoylase from Methanococcus jannaschii.</title>
        <authorList>
            <person name="Hack E.S."/>
            <person name="Vorobyova T."/>
            <person name="Sakash J.B."/>
            <person name="West J.M."/>
            <person name="Macol C.P."/>
            <person name="Herve G."/>
            <person name="Williams M.K."/>
            <person name="Kantrowitz E.R."/>
        </authorList>
    </citation>
    <scope>CATALYTIC ACTIVITY</scope>
    <scope>PATHWAY</scope>
    <scope>SUBUNIT</scope>
</reference>
<reference key="3">
    <citation type="journal article" date="2000" name="Acta Crystallogr. D">
        <title>Crystallization and structure determination of the catalytic trimer of Methanococcus jannaschii aspartate transcarbamoylase.</title>
        <authorList>
            <person name="Vitali J."/>
            <person name="Vorobyova T."/>
            <person name="Webster G."/>
            <person name="Kantrowitz E.R."/>
        </authorList>
    </citation>
    <scope>CRYSTALLIZATION</scope>
</reference>
<gene>
    <name evidence="1" type="primary">pyrB</name>
    <name type="ordered locus">MJ1581</name>
</gene>
<keyword id="KW-0002">3D-structure</keyword>
<keyword id="KW-0665">Pyrimidine biosynthesis</keyword>
<keyword id="KW-1185">Reference proteome</keyword>
<keyword id="KW-0808">Transferase</keyword>
<protein>
    <recommendedName>
        <fullName evidence="1">Aspartate carbamoyltransferase catalytic subunit</fullName>
        <ecNumber evidence="1">2.1.3.2</ecNumber>
    </recommendedName>
    <alternativeName>
        <fullName evidence="1">Aspartate transcarbamylase</fullName>
        <shortName evidence="1">ATCase</shortName>
    </alternativeName>
</protein>
<evidence type="ECO:0000255" key="1">
    <source>
        <dbReference type="HAMAP-Rule" id="MF_00001"/>
    </source>
</evidence>
<evidence type="ECO:0000269" key="2">
    <source>
    </source>
</evidence>
<evidence type="ECO:0000305" key="3"/>
<evidence type="ECO:0007829" key="4">
    <source>
        <dbReference type="PDB" id="2RGW"/>
    </source>
</evidence>
<evidence type="ECO:0007829" key="5">
    <source>
        <dbReference type="PDB" id="3E2P"/>
    </source>
</evidence>
<evidence type="ECO:0007829" key="6">
    <source>
        <dbReference type="PDB" id="4EKN"/>
    </source>
</evidence>
<dbReference type="EC" id="2.1.3.2" evidence="1"/>
<dbReference type="EMBL" id="L77117">
    <property type="protein sequence ID" value="AAB99601.1"/>
    <property type="molecule type" value="Genomic_DNA"/>
</dbReference>
<dbReference type="PIR" id="D64497">
    <property type="entry name" value="D64497"/>
</dbReference>
<dbReference type="RefSeq" id="WP_010871106.1">
    <property type="nucleotide sequence ID" value="NC_000909.1"/>
</dbReference>
<dbReference type="PDB" id="2RGW">
    <property type="method" value="X-ray"/>
    <property type="resolution" value="2.80 A"/>
    <property type="chains" value="A/B/C/D/E/F=1-306"/>
</dbReference>
<dbReference type="PDB" id="3E2P">
    <property type="method" value="X-ray"/>
    <property type="resolution" value="3.00 A"/>
    <property type="chains" value="A/B/C/D/E/F/I/J/K/L/M/N=1-306"/>
</dbReference>
<dbReference type="PDB" id="4EKN">
    <property type="method" value="X-ray"/>
    <property type="resolution" value="2.50 A"/>
    <property type="chains" value="B=1-306"/>
</dbReference>
<dbReference type="PDBsum" id="2RGW"/>
<dbReference type="PDBsum" id="3E2P"/>
<dbReference type="PDBsum" id="4EKN"/>
<dbReference type="SMR" id="Q58976"/>
<dbReference type="FunCoup" id="Q58976">
    <property type="interactions" value="253"/>
</dbReference>
<dbReference type="STRING" id="243232.MJ_1581"/>
<dbReference type="PaxDb" id="243232-MJ_1581"/>
<dbReference type="EnsemblBacteria" id="AAB99601">
    <property type="protein sequence ID" value="AAB99601"/>
    <property type="gene ID" value="MJ_1581"/>
</dbReference>
<dbReference type="GeneID" id="1452490"/>
<dbReference type="KEGG" id="mja:MJ_1581"/>
<dbReference type="eggNOG" id="arCOG00911">
    <property type="taxonomic scope" value="Archaea"/>
</dbReference>
<dbReference type="HOGENOM" id="CLU_043846_1_2_2"/>
<dbReference type="InParanoid" id="Q58976"/>
<dbReference type="OrthoDB" id="7792at2157"/>
<dbReference type="PhylomeDB" id="Q58976"/>
<dbReference type="BRENDA" id="2.1.3.2">
    <property type="organism ID" value="3260"/>
</dbReference>
<dbReference type="UniPathway" id="UPA00070">
    <property type="reaction ID" value="UER00116"/>
</dbReference>
<dbReference type="EvolutionaryTrace" id="Q58976"/>
<dbReference type="Proteomes" id="UP000000805">
    <property type="component" value="Chromosome"/>
</dbReference>
<dbReference type="GO" id="GO:0005737">
    <property type="term" value="C:cytoplasm"/>
    <property type="evidence" value="ECO:0000318"/>
    <property type="project" value="GO_Central"/>
</dbReference>
<dbReference type="GO" id="GO:0016597">
    <property type="term" value="F:amino acid binding"/>
    <property type="evidence" value="ECO:0007669"/>
    <property type="project" value="InterPro"/>
</dbReference>
<dbReference type="GO" id="GO:0004070">
    <property type="term" value="F:aspartate carbamoyltransferase activity"/>
    <property type="evidence" value="ECO:0007669"/>
    <property type="project" value="UniProtKB-UniRule"/>
</dbReference>
<dbReference type="GO" id="GO:0006207">
    <property type="term" value="P:'de novo' pyrimidine nucleobase biosynthetic process"/>
    <property type="evidence" value="ECO:0007669"/>
    <property type="project" value="InterPro"/>
</dbReference>
<dbReference type="GO" id="GO:0044205">
    <property type="term" value="P:'de novo' UMP biosynthetic process"/>
    <property type="evidence" value="ECO:0007669"/>
    <property type="project" value="UniProtKB-UniRule"/>
</dbReference>
<dbReference type="GO" id="GO:0006541">
    <property type="term" value="P:glutamine metabolic process"/>
    <property type="evidence" value="ECO:0000318"/>
    <property type="project" value="GO_Central"/>
</dbReference>
<dbReference type="FunFam" id="3.40.50.1370:FF:000001">
    <property type="entry name" value="Aspartate carbamoyltransferase"/>
    <property type="match status" value="1"/>
</dbReference>
<dbReference type="FunFam" id="3.40.50.1370:FF:000002">
    <property type="entry name" value="Aspartate carbamoyltransferase 2"/>
    <property type="match status" value="1"/>
</dbReference>
<dbReference type="Gene3D" id="3.40.50.1370">
    <property type="entry name" value="Aspartate/ornithine carbamoyltransferase"/>
    <property type="match status" value="2"/>
</dbReference>
<dbReference type="HAMAP" id="MF_00001">
    <property type="entry name" value="Asp_carb_tr"/>
    <property type="match status" value="1"/>
</dbReference>
<dbReference type="InterPro" id="IPR006132">
    <property type="entry name" value="Asp/Orn_carbamoyltranf_P-bd"/>
</dbReference>
<dbReference type="InterPro" id="IPR006130">
    <property type="entry name" value="Asp/Orn_carbamoylTrfase"/>
</dbReference>
<dbReference type="InterPro" id="IPR036901">
    <property type="entry name" value="Asp/Orn_carbamoylTrfase_sf"/>
</dbReference>
<dbReference type="InterPro" id="IPR002082">
    <property type="entry name" value="Asp_carbamoyltransf"/>
</dbReference>
<dbReference type="InterPro" id="IPR006131">
    <property type="entry name" value="Asp_carbamoyltransf_Asp/Orn-bd"/>
</dbReference>
<dbReference type="NCBIfam" id="TIGR00670">
    <property type="entry name" value="asp_carb_tr"/>
    <property type="match status" value="1"/>
</dbReference>
<dbReference type="NCBIfam" id="NF002032">
    <property type="entry name" value="PRK00856.1"/>
    <property type="match status" value="1"/>
</dbReference>
<dbReference type="PANTHER" id="PTHR45753:SF6">
    <property type="entry name" value="ASPARTATE CARBAMOYLTRANSFERASE"/>
    <property type="match status" value="1"/>
</dbReference>
<dbReference type="PANTHER" id="PTHR45753">
    <property type="entry name" value="ORNITHINE CARBAMOYLTRANSFERASE, MITOCHONDRIAL"/>
    <property type="match status" value="1"/>
</dbReference>
<dbReference type="Pfam" id="PF00185">
    <property type="entry name" value="OTCace"/>
    <property type="match status" value="1"/>
</dbReference>
<dbReference type="Pfam" id="PF02729">
    <property type="entry name" value="OTCace_N"/>
    <property type="match status" value="1"/>
</dbReference>
<dbReference type="PRINTS" id="PR00100">
    <property type="entry name" value="AOTCASE"/>
</dbReference>
<dbReference type="PRINTS" id="PR00101">
    <property type="entry name" value="ATCASE"/>
</dbReference>
<dbReference type="SUPFAM" id="SSF53671">
    <property type="entry name" value="Aspartate/ornithine carbamoyltransferase"/>
    <property type="match status" value="1"/>
</dbReference>
<dbReference type="PROSITE" id="PS00097">
    <property type="entry name" value="CARBAMOYLTRANSFERASE"/>
    <property type="match status" value="1"/>
</dbReference>
<comment type="function">
    <text evidence="1">Catalyzes the condensation of carbamoyl phosphate and aspartate to form carbamoyl aspartate and inorganic phosphate, the committed step in the de novo pyrimidine nucleotide biosynthesis pathway.</text>
</comment>
<comment type="catalytic activity">
    <reaction evidence="1 2">
        <text>carbamoyl phosphate + L-aspartate = N-carbamoyl-L-aspartate + phosphate + H(+)</text>
        <dbReference type="Rhea" id="RHEA:20013"/>
        <dbReference type="ChEBI" id="CHEBI:15378"/>
        <dbReference type="ChEBI" id="CHEBI:29991"/>
        <dbReference type="ChEBI" id="CHEBI:32814"/>
        <dbReference type="ChEBI" id="CHEBI:43474"/>
        <dbReference type="ChEBI" id="CHEBI:58228"/>
        <dbReference type="EC" id="2.1.3.2"/>
    </reaction>
</comment>
<comment type="pathway">
    <text evidence="1 2">Pyrimidine metabolism; UMP biosynthesis via de novo pathway; (S)-dihydroorotate from bicarbonate: step 2/3.</text>
</comment>
<comment type="subunit">
    <text evidence="2">Heterododecamer (2C3:3R2) of six catalytic PyrB chains organized as two trimers (C3), and six regulatory PyrI chains organized as three dimers (R2).</text>
</comment>
<comment type="similarity">
    <text evidence="1 3">Belongs to the aspartate/ornithine carbamoyltransferase superfamily. ATCase family.</text>
</comment>
<name>PYRB_METJA</name>
<proteinExistence type="evidence at protein level"/>
<accession>Q58976</accession>
<sequence length="306" mass="35160">MKHLISMKDIGKEEILEILDEARKMEELLNTKRPLKLLEGKILATVFYEPSTRTRLSFETAMKRLGGEVITMTDLKSSSVAKGESLIDTIRVISGYADIIVLRHPSEGAARLASEYSQVPIINAGDGSNQHPTQTLLDLYTIMREIGRIDGIKIAFVGDLKYGRTVHSLVYALSLFENVEMYFVSPKELRLPKDIIEDLKAKNIKFYEKESLDDLDDDIDVLYVTRIQKERFPDPNEYEKVKGSYKIKREYVEGKKFIIMHPLPRVDEIDYDVDDLPQAKYFKQSFYGIPVRMAILKKLIEDNEGE</sequence>
<feature type="chain" id="PRO_0000113247" description="Aspartate carbamoyltransferase catalytic subunit">
    <location>
        <begin position="1"/>
        <end position="306"/>
    </location>
</feature>
<feature type="binding site" evidence="1">
    <location>
        <position position="53"/>
    </location>
    <ligand>
        <name>carbamoyl phosphate</name>
        <dbReference type="ChEBI" id="CHEBI:58228"/>
    </ligand>
</feature>
<feature type="binding site" evidence="1">
    <location>
        <position position="54"/>
    </location>
    <ligand>
        <name>carbamoyl phosphate</name>
        <dbReference type="ChEBI" id="CHEBI:58228"/>
    </ligand>
</feature>
<feature type="binding site" evidence="1">
    <location>
        <position position="82"/>
    </location>
    <ligand>
        <name>L-aspartate</name>
        <dbReference type="ChEBI" id="CHEBI:29991"/>
    </ligand>
</feature>
<feature type="binding site" evidence="1">
    <location>
        <position position="103"/>
    </location>
    <ligand>
        <name>carbamoyl phosphate</name>
        <dbReference type="ChEBI" id="CHEBI:58228"/>
    </ligand>
</feature>
<feature type="binding site" evidence="1">
    <location>
        <position position="131"/>
    </location>
    <ligand>
        <name>carbamoyl phosphate</name>
        <dbReference type="ChEBI" id="CHEBI:58228"/>
    </ligand>
</feature>
<feature type="binding site" evidence="1">
    <location>
        <position position="134"/>
    </location>
    <ligand>
        <name>carbamoyl phosphate</name>
        <dbReference type="ChEBI" id="CHEBI:58228"/>
    </ligand>
</feature>
<feature type="binding site" evidence="1">
    <location>
        <position position="164"/>
    </location>
    <ligand>
        <name>L-aspartate</name>
        <dbReference type="ChEBI" id="CHEBI:29991"/>
    </ligand>
</feature>
<feature type="binding site" evidence="1">
    <location>
        <position position="226"/>
    </location>
    <ligand>
        <name>L-aspartate</name>
        <dbReference type="ChEBI" id="CHEBI:29991"/>
    </ligand>
</feature>
<feature type="binding site" evidence="1">
    <location>
        <position position="263"/>
    </location>
    <ligand>
        <name>carbamoyl phosphate</name>
        <dbReference type="ChEBI" id="CHEBI:58228"/>
    </ligand>
</feature>
<feature type="binding site" evidence="1">
    <location>
        <position position="264"/>
    </location>
    <ligand>
        <name>carbamoyl phosphate</name>
        <dbReference type="ChEBI" id="CHEBI:58228"/>
    </ligand>
</feature>
<feature type="helix" evidence="6">
    <location>
        <begin position="7"/>
        <end position="9"/>
    </location>
</feature>
<feature type="helix" evidence="6">
    <location>
        <begin position="12"/>
        <end position="30"/>
    </location>
</feature>
<feature type="turn" evidence="6">
    <location>
        <begin position="37"/>
        <end position="40"/>
    </location>
</feature>
<feature type="strand" evidence="6">
    <location>
        <begin position="42"/>
        <end position="49"/>
    </location>
</feature>
<feature type="helix" evidence="6">
    <location>
        <begin position="52"/>
        <end position="64"/>
    </location>
</feature>
<feature type="strand" evidence="6">
    <location>
        <begin position="68"/>
        <end position="72"/>
    </location>
</feature>
<feature type="turn" evidence="6">
    <location>
        <begin position="76"/>
        <end position="79"/>
    </location>
</feature>
<feature type="strand" evidence="6">
    <location>
        <begin position="80"/>
        <end position="83"/>
    </location>
</feature>
<feature type="helix" evidence="6">
    <location>
        <begin position="86"/>
        <end position="96"/>
    </location>
</feature>
<feature type="strand" evidence="6">
    <location>
        <begin position="98"/>
        <end position="103"/>
    </location>
</feature>
<feature type="strand" evidence="5">
    <location>
        <begin position="105"/>
        <end position="108"/>
    </location>
</feature>
<feature type="helix" evidence="6">
    <location>
        <begin position="109"/>
        <end position="116"/>
    </location>
</feature>
<feature type="strand" evidence="6">
    <location>
        <begin position="121"/>
        <end position="124"/>
    </location>
</feature>
<feature type="strand" evidence="6">
    <location>
        <begin position="126"/>
        <end position="129"/>
    </location>
</feature>
<feature type="helix" evidence="6">
    <location>
        <begin position="132"/>
        <end position="146"/>
    </location>
</feature>
<feature type="strand" evidence="4">
    <location>
        <begin position="149"/>
        <end position="151"/>
    </location>
</feature>
<feature type="strand" evidence="6">
    <location>
        <begin position="153"/>
        <end position="158"/>
    </location>
</feature>
<feature type="turn" evidence="6">
    <location>
        <begin position="160"/>
        <end position="162"/>
    </location>
</feature>
<feature type="helix" evidence="6">
    <location>
        <begin position="164"/>
        <end position="174"/>
    </location>
</feature>
<feature type="strand" evidence="6">
    <location>
        <begin position="176"/>
        <end position="178"/>
    </location>
</feature>
<feature type="strand" evidence="6">
    <location>
        <begin position="180"/>
        <end position="184"/>
    </location>
</feature>
<feature type="helix" evidence="6">
    <location>
        <begin position="187"/>
        <end position="189"/>
    </location>
</feature>
<feature type="helix" evidence="6">
    <location>
        <begin position="193"/>
        <end position="201"/>
    </location>
</feature>
<feature type="strand" evidence="6">
    <location>
        <begin position="206"/>
        <end position="210"/>
    </location>
</feature>
<feature type="helix" evidence="6">
    <location>
        <begin position="212"/>
        <end position="214"/>
    </location>
</feature>
<feature type="strand" evidence="6">
    <location>
        <begin position="220"/>
        <end position="224"/>
    </location>
</feature>
<feature type="helix" evidence="6">
    <location>
        <begin position="229"/>
        <end position="231"/>
    </location>
</feature>
<feature type="helix" evidence="6">
    <location>
        <begin position="235"/>
        <end position="245"/>
    </location>
</feature>
<feature type="helix" evidence="6">
    <location>
        <begin position="249"/>
        <end position="252"/>
    </location>
</feature>
<feature type="strand" evidence="6">
    <location>
        <begin position="258"/>
        <end position="260"/>
    </location>
</feature>
<feature type="strand" evidence="6">
    <location>
        <begin position="266"/>
        <end position="269"/>
    </location>
</feature>
<feature type="helix" evidence="6">
    <location>
        <begin position="271"/>
        <end position="273"/>
    </location>
</feature>
<feature type="helix" evidence="6">
    <location>
        <begin position="281"/>
        <end position="302"/>
    </location>
</feature>